<proteinExistence type="inferred from homology"/>
<sequence length="133" mass="14398">MTSRRGRAVGFIRDFQAFILKGNVVELAVAVIIGGAFNKIVSSFVGDLVMPLVNPLIPGGDWRTAVIGPGLKIGSFAGSVIDFLIIAFVLYLAIRAIERFKRKEEAVVAAAEPDVQQQMLATLERIADNLEAR</sequence>
<comment type="function">
    <text evidence="1">Channel that opens in response to stretch forces in the membrane lipid bilayer. May participate in the regulation of osmotic pressure changes within the cell.</text>
</comment>
<comment type="subunit">
    <text evidence="1">Homopentamer.</text>
</comment>
<comment type="subcellular location">
    <subcellularLocation>
        <location evidence="1">Cell inner membrane</location>
        <topology evidence="1">Multi-pass membrane protein</topology>
    </subcellularLocation>
</comment>
<comment type="similarity">
    <text evidence="1">Belongs to the MscL family.</text>
</comment>
<accession>Q31LP8</accession>
<protein>
    <recommendedName>
        <fullName evidence="1">Large-conductance mechanosensitive channel</fullName>
    </recommendedName>
</protein>
<reference key="1">
    <citation type="submission" date="2005-08" db="EMBL/GenBank/DDBJ databases">
        <title>Complete sequence of chromosome 1 of Synechococcus elongatus PCC 7942.</title>
        <authorList>
            <consortium name="US DOE Joint Genome Institute"/>
            <person name="Copeland A."/>
            <person name="Lucas S."/>
            <person name="Lapidus A."/>
            <person name="Barry K."/>
            <person name="Detter J.C."/>
            <person name="Glavina T."/>
            <person name="Hammon N."/>
            <person name="Israni S."/>
            <person name="Pitluck S."/>
            <person name="Schmutz J."/>
            <person name="Larimer F."/>
            <person name="Land M."/>
            <person name="Kyrpides N."/>
            <person name="Lykidis A."/>
            <person name="Golden S."/>
            <person name="Richardson P."/>
        </authorList>
    </citation>
    <scope>NUCLEOTIDE SEQUENCE [LARGE SCALE GENOMIC DNA]</scope>
    <source>
        <strain>ATCC 33912 / PCC 7942 / FACHB-805</strain>
    </source>
</reference>
<dbReference type="EMBL" id="CP000100">
    <property type="protein sequence ID" value="ABB58021.1"/>
    <property type="molecule type" value="Genomic_DNA"/>
</dbReference>
<dbReference type="RefSeq" id="WP_011244415.1">
    <property type="nucleotide sequence ID" value="NZ_JACJTX010000001.1"/>
</dbReference>
<dbReference type="SMR" id="Q31LP8"/>
<dbReference type="STRING" id="1140.Synpcc7942_1991"/>
<dbReference type="PaxDb" id="1140-Synpcc7942_1991"/>
<dbReference type="GeneID" id="72430864"/>
<dbReference type="KEGG" id="syf:Synpcc7942_1991"/>
<dbReference type="eggNOG" id="COG1970">
    <property type="taxonomic scope" value="Bacteria"/>
</dbReference>
<dbReference type="HOGENOM" id="CLU_095787_0_0_3"/>
<dbReference type="OrthoDB" id="9810350at2"/>
<dbReference type="BioCyc" id="SYNEL:SYNPCC7942_1991-MONOMER"/>
<dbReference type="Proteomes" id="UP000889800">
    <property type="component" value="Chromosome"/>
</dbReference>
<dbReference type="GO" id="GO:0005886">
    <property type="term" value="C:plasma membrane"/>
    <property type="evidence" value="ECO:0007669"/>
    <property type="project" value="UniProtKB-SubCell"/>
</dbReference>
<dbReference type="GO" id="GO:0008381">
    <property type="term" value="F:mechanosensitive monoatomic ion channel activity"/>
    <property type="evidence" value="ECO:0007669"/>
    <property type="project" value="UniProtKB-UniRule"/>
</dbReference>
<dbReference type="Gene3D" id="1.10.1200.120">
    <property type="entry name" value="Large-conductance mechanosensitive channel, MscL, domain 1"/>
    <property type="match status" value="1"/>
</dbReference>
<dbReference type="HAMAP" id="MF_00115">
    <property type="entry name" value="MscL"/>
    <property type="match status" value="1"/>
</dbReference>
<dbReference type="InterPro" id="IPR001185">
    <property type="entry name" value="MS_channel"/>
</dbReference>
<dbReference type="InterPro" id="IPR037673">
    <property type="entry name" value="MSC/AndL"/>
</dbReference>
<dbReference type="InterPro" id="IPR036019">
    <property type="entry name" value="MscL_channel"/>
</dbReference>
<dbReference type="NCBIfam" id="TIGR00220">
    <property type="entry name" value="mscL"/>
    <property type="match status" value="1"/>
</dbReference>
<dbReference type="PANTHER" id="PTHR30266:SF2">
    <property type="entry name" value="LARGE-CONDUCTANCE MECHANOSENSITIVE CHANNEL"/>
    <property type="match status" value="1"/>
</dbReference>
<dbReference type="PANTHER" id="PTHR30266">
    <property type="entry name" value="MECHANOSENSITIVE CHANNEL MSCL"/>
    <property type="match status" value="1"/>
</dbReference>
<dbReference type="Pfam" id="PF01741">
    <property type="entry name" value="MscL"/>
    <property type="match status" value="1"/>
</dbReference>
<dbReference type="PRINTS" id="PR01264">
    <property type="entry name" value="MECHCHANNEL"/>
</dbReference>
<dbReference type="SUPFAM" id="SSF81330">
    <property type="entry name" value="Gated mechanosensitive channel"/>
    <property type="match status" value="1"/>
</dbReference>
<name>MSCL_SYNE7</name>
<gene>
    <name evidence="1" type="primary">mscL</name>
    <name type="ordered locus">Synpcc7942_1991</name>
</gene>
<feature type="chain" id="PRO_0000238046" description="Large-conductance mechanosensitive channel">
    <location>
        <begin position="1"/>
        <end position="133"/>
    </location>
</feature>
<feature type="transmembrane region" description="Helical" evidence="1">
    <location>
        <begin position="17"/>
        <end position="37"/>
    </location>
</feature>
<feature type="transmembrane region" description="Helical" evidence="1">
    <location>
        <begin position="73"/>
        <end position="93"/>
    </location>
</feature>
<evidence type="ECO:0000255" key="1">
    <source>
        <dbReference type="HAMAP-Rule" id="MF_00115"/>
    </source>
</evidence>
<organism>
    <name type="scientific">Synechococcus elongatus (strain ATCC 33912 / PCC 7942 / FACHB-805)</name>
    <name type="common">Anacystis nidulans R2</name>
    <dbReference type="NCBI Taxonomy" id="1140"/>
    <lineage>
        <taxon>Bacteria</taxon>
        <taxon>Bacillati</taxon>
        <taxon>Cyanobacteriota</taxon>
        <taxon>Cyanophyceae</taxon>
        <taxon>Synechococcales</taxon>
        <taxon>Synechococcaceae</taxon>
        <taxon>Synechococcus</taxon>
    </lineage>
</organism>
<keyword id="KW-0997">Cell inner membrane</keyword>
<keyword id="KW-1003">Cell membrane</keyword>
<keyword id="KW-0407">Ion channel</keyword>
<keyword id="KW-0406">Ion transport</keyword>
<keyword id="KW-0472">Membrane</keyword>
<keyword id="KW-1185">Reference proteome</keyword>
<keyword id="KW-0812">Transmembrane</keyword>
<keyword id="KW-1133">Transmembrane helix</keyword>
<keyword id="KW-0813">Transport</keyword>